<dbReference type="EMBL" id="CP000439">
    <property type="protein sequence ID" value="ABK89199.1"/>
    <property type="molecule type" value="Genomic_DNA"/>
</dbReference>
<dbReference type="RefSeq" id="WP_003038295.1">
    <property type="nucleotide sequence ID" value="NC_008601.1"/>
</dbReference>
<dbReference type="SMR" id="A0Q4N4"/>
<dbReference type="KEGG" id="ftn:FTN_0293"/>
<dbReference type="KEGG" id="ftx:AW25_1748"/>
<dbReference type="BioCyc" id="FTUL401614:G1G75-304-MONOMER"/>
<dbReference type="Proteomes" id="UP000000762">
    <property type="component" value="Chromosome"/>
</dbReference>
<dbReference type="GO" id="GO:0030288">
    <property type="term" value="C:outer membrane-bounded periplasmic space"/>
    <property type="evidence" value="ECO:0007669"/>
    <property type="project" value="TreeGrafter"/>
</dbReference>
<dbReference type="GO" id="GO:0044874">
    <property type="term" value="P:lipoprotein localization to outer membrane"/>
    <property type="evidence" value="ECO:0007669"/>
    <property type="project" value="UniProtKB-UniRule"/>
</dbReference>
<dbReference type="GO" id="GO:0042953">
    <property type="term" value="P:lipoprotein transport"/>
    <property type="evidence" value="ECO:0007669"/>
    <property type="project" value="InterPro"/>
</dbReference>
<dbReference type="CDD" id="cd16325">
    <property type="entry name" value="LolA"/>
    <property type="match status" value="1"/>
</dbReference>
<dbReference type="Gene3D" id="2.50.20.10">
    <property type="entry name" value="Lipoprotein localisation LolA/LolB/LppX"/>
    <property type="match status" value="1"/>
</dbReference>
<dbReference type="HAMAP" id="MF_00240">
    <property type="entry name" value="LolA"/>
    <property type="match status" value="1"/>
</dbReference>
<dbReference type="InterPro" id="IPR029046">
    <property type="entry name" value="LolA/LolB/LppX"/>
</dbReference>
<dbReference type="InterPro" id="IPR004564">
    <property type="entry name" value="OM_lipoprot_carrier_LolA-like"/>
</dbReference>
<dbReference type="InterPro" id="IPR018323">
    <property type="entry name" value="OM_lipoprot_carrier_LolA_Pbac"/>
</dbReference>
<dbReference type="NCBIfam" id="TIGR00547">
    <property type="entry name" value="lolA"/>
    <property type="match status" value="1"/>
</dbReference>
<dbReference type="PANTHER" id="PTHR35869">
    <property type="entry name" value="OUTER-MEMBRANE LIPOPROTEIN CARRIER PROTEIN"/>
    <property type="match status" value="1"/>
</dbReference>
<dbReference type="PANTHER" id="PTHR35869:SF1">
    <property type="entry name" value="OUTER-MEMBRANE LIPOPROTEIN CARRIER PROTEIN"/>
    <property type="match status" value="1"/>
</dbReference>
<dbReference type="Pfam" id="PF03548">
    <property type="entry name" value="LolA"/>
    <property type="match status" value="1"/>
</dbReference>
<dbReference type="SUPFAM" id="SSF89392">
    <property type="entry name" value="Prokaryotic lipoproteins and lipoprotein localization factors"/>
    <property type="match status" value="1"/>
</dbReference>
<comment type="function">
    <text evidence="1">Participates in the translocation of lipoproteins from the inner membrane to the outer membrane. Only forms a complex with a lipoprotein if the residue after the N-terminal Cys is not an aspartate (The Asp acts as a targeting signal to indicate that the lipoprotein should stay in the inner membrane).</text>
</comment>
<comment type="subunit">
    <text evidence="1">Monomer.</text>
</comment>
<comment type="subcellular location">
    <subcellularLocation>
        <location evidence="1">Periplasm</location>
    </subcellularLocation>
</comment>
<comment type="similarity">
    <text evidence="1">Belongs to the LolA family.</text>
</comment>
<evidence type="ECO:0000255" key="1">
    <source>
        <dbReference type="HAMAP-Rule" id="MF_00240"/>
    </source>
</evidence>
<keyword id="KW-0143">Chaperone</keyword>
<keyword id="KW-0574">Periplasm</keyword>
<keyword id="KW-0653">Protein transport</keyword>
<keyword id="KW-0732">Signal</keyword>
<keyword id="KW-0813">Transport</keyword>
<sequence length="205" mass="23410">MKKIIICFIFVFSINISFADATSDLIDKIKNIHSMTANFNQKLIDGQTNNNLNSKGNMSLKKPQYFKWITTSPNNQEIVSNGTKLWIYDGDLDQLIIKKVSNDIAQFPYLILLSKNTNNINKLFTVTAQDNNSYILKPKNDQMIDSIKIKFTPNNQLEYLEISTSLNQFTKIEFNNVKTDVDISNTSFDFTAPQDTDIIDETKSA</sequence>
<accession>A0Q4N4</accession>
<gene>
    <name evidence="1" type="primary">lolA</name>
    <name type="ordered locus">FTN_0293</name>
</gene>
<organism>
    <name type="scientific">Francisella tularensis subsp. novicida (strain U112)</name>
    <dbReference type="NCBI Taxonomy" id="401614"/>
    <lineage>
        <taxon>Bacteria</taxon>
        <taxon>Pseudomonadati</taxon>
        <taxon>Pseudomonadota</taxon>
        <taxon>Gammaproteobacteria</taxon>
        <taxon>Thiotrichales</taxon>
        <taxon>Francisellaceae</taxon>
        <taxon>Francisella</taxon>
    </lineage>
</organism>
<protein>
    <recommendedName>
        <fullName evidence="1">Outer-membrane lipoprotein carrier protein</fullName>
    </recommendedName>
</protein>
<feature type="signal peptide" evidence="1">
    <location>
        <begin position="1"/>
        <end position="19"/>
    </location>
</feature>
<feature type="chain" id="PRO_1000071826" description="Outer-membrane lipoprotein carrier protein">
    <location>
        <begin position="20"/>
        <end position="205"/>
    </location>
</feature>
<reference key="1">
    <citation type="journal article" date="2007" name="Genome Biol.">
        <title>Comparison of Francisella tularensis genomes reveals evolutionary events associated with the emergence of human pathogenic strains.</title>
        <authorList>
            <person name="Rohmer L."/>
            <person name="Fong C."/>
            <person name="Abmayr S."/>
            <person name="Wasnick M."/>
            <person name="Larson Freeman T.J."/>
            <person name="Radey M."/>
            <person name="Guina T."/>
            <person name="Svensson K."/>
            <person name="Hayden H.S."/>
            <person name="Jacobs M."/>
            <person name="Gallagher L.A."/>
            <person name="Manoil C."/>
            <person name="Ernst R.K."/>
            <person name="Drees B."/>
            <person name="Buckley D."/>
            <person name="Haugen E."/>
            <person name="Bovee D."/>
            <person name="Zhou Y."/>
            <person name="Chang J."/>
            <person name="Levy R."/>
            <person name="Lim R."/>
            <person name="Gillett W."/>
            <person name="Guenthener D."/>
            <person name="Kang A."/>
            <person name="Shaffer S.A."/>
            <person name="Taylor G."/>
            <person name="Chen J."/>
            <person name="Gallis B."/>
            <person name="D'Argenio D.A."/>
            <person name="Forsman M."/>
            <person name="Olson M.V."/>
            <person name="Goodlett D.R."/>
            <person name="Kaul R."/>
            <person name="Miller S.I."/>
            <person name="Brittnacher M.J."/>
        </authorList>
    </citation>
    <scope>NUCLEOTIDE SEQUENCE [LARGE SCALE GENOMIC DNA]</scope>
    <source>
        <strain>U112</strain>
    </source>
</reference>
<proteinExistence type="inferred from homology"/>
<name>LOLA_FRATN</name>